<reference key="1">
    <citation type="journal article" date="1998" name="EMBO J.">
        <title>Early evolutionary origin of the neurotrophin receptor family.</title>
        <authorList>
            <person name="van Kesteren R.E."/>
            <person name="Fainzilber M."/>
            <person name="Hauser G."/>
            <person name="van Minnen J."/>
            <person name="Vreugdenhil E."/>
            <person name="Smit A.B."/>
            <person name="Ibanez C.F."/>
            <person name="Geraerts W.P.M."/>
            <person name="Bulloch A.G.M."/>
        </authorList>
    </citation>
    <scope>NUCLEOTIDE SEQUENCE [MRNA]</scope>
</reference>
<feature type="signal peptide" evidence="2">
    <location>
        <begin position="1"/>
        <end position="33"/>
    </location>
</feature>
<feature type="chain" id="PRO_0000016737" description="Putative neurotrophin receptor LTRK 1">
    <location>
        <begin position="34"/>
        <end position="794"/>
    </location>
</feature>
<feature type="topological domain" description="Extracellular" evidence="2">
    <location>
        <begin position="34"/>
        <end position="419"/>
    </location>
</feature>
<feature type="transmembrane region" description="Helical" evidence="2">
    <location>
        <begin position="420"/>
        <end position="440"/>
    </location>
</feature>
<feature type="topological domain" description="Cytoplasmic" evidence="2">
    <location>
        <begin position="441"/>
        <end position="794"/>
    </location>
</feature>
<feature type="repeat" description="LRR 1">
    <location>
        <begin position="181"/>
        <end position="202"/>
    </location>
</feature>
<feature type="repeat" description="LRR 2">
    <location>
        <begin position="205"/>
        <end position="226"/>
    </location>
</feature>
<feature type="domain" description="LRRCT">
    <location>
        <begin position="237"/>
        <end position="280"/>
    </location>
</feature>
<feature type="domain" description="Protein kinase" evidence="3">
    <location>
        <begin position="504"/>
        <end position="775"/>
    </location>
</feature>
<feature type="region of interest" description="Disordered" evidence="5">
    <location>
        <begin position="36"/>
        <end position="102"/>
    </location>
</feature>
<feature type="active site" description="Proton acceptor" evidence="3 4">
    <location>
        <position position="647"/>
    </location>
</feature>
<feature type="binding site" evidence="3">
    <location>
        <begin position="510"/>
        <end position="518"/>
    </location>
    <ligand>
        <name>ATP</name>
        <dbReference type="ChEBI" id="CHEBI:30616"/>
    </ligand>
</feature>
<feature type="binding site" evidence="3">
    <location>
        <position position="538"/>
    </location>
    <ligand>
        <name>ATP</name>
        <dbReference type="ChEBI" id="CHEBI:30616"/>
    </ligand>
</feature>
<feature type="modified residue" description="Phosphotyrosine; by autocatalysis" evidence="1">
    <location>
        <position position="673"/>
    </location>
</feature>
<feature type="modified residue" description="Phosphotyrosine; by autocatalysis" evidence="1">
    <location>
        <position position="677"/>
    </location>
</feature>
<feature type="modified residue" description="Phosphotyrosine; by autocatalysis" evidence="1">
    <location>
        <position position="678"/>
    </location>
</feature>
<feature type="modified residue" description="Phosphotyrosine; by autocatalysis" evidence="1">
    <location>
        <position position="789"/>
    </location>
</feature>
<feature type="glycosylation site" description="N-linked (GlcNAc...) asparagine" evidence="2">
    <location>
        <position position="64"/>
    </location>
</feature>
<feature type="glycosylation site" description="N-linked (GlcNAc...) asparagine" evidence="2">
    <location>
        <position position="102"/>
    </location>
</feature>
<feature type="glycosylation site" description="N-linked (GlcNAc...) asparagine" evidence="2">
    <location>
        <position position="128"/>
    </location>
</feature>
<feature type="glycosylation site" description="N-linked (GlcNAc...) asparagine" evidence="2">
    <location>
        <position position="288"/>
    </location>
</feature>
<feature type="glycosylation site" description="N-linked (GlcNAc...) asparagine" evidence="2">
    <location>
        <position position="374"/>
    </location>
</feature>
<dbReference type="EC" id="2.7.10.1"/>
<dbReference type="EMBL" id="U61728">
    <property type="protein sequence ID" value="AAC26840.1"/>
    <property type="molecule type" value="mRNA"/>
</dbReference>
<dbReference type="SMR" id="O76997"/>
<dbReference type="GO" id="GO:0030424">
    <property type="term" value="C:axon"/>
    <property type="evidence" value="ECO:0007669"/>
    <property type="project" value="TreeGrafter"/>
</dbReference>
<dbReference type="GO" id="GO:0005886">
    <property type="term" value="C:plasma membrane"/>
    <property type="evidence" value="ECO:0007669"/>
    <property type="project" value="TreeGrafter"/>
</dbReference>
<dbReference type="GO" id="GO:0043235">
    <property type="term" value="C:receptor complex"/>
    <property type="evidence" value="ECO:0007669"/>
    <property type="project" value="TreeGrafter"/>
</dbReference>
<dbReference type="GO" id="GO:0005524">
    <property type="term" value="F:ATP binding"/>
    <property type="evidence" value="ECO:0007669"/>
    <property type="project" value="UniProtKB-KW"/>
</dbReference>
<dbReference type="GO" id="GO:0043121">
    <property type="term" value="F:neurotrophin binding"/>
    <property type="evidence" value="ECO:0007669"/>
    <property type="project" value="TreeGrafter"/>
</dbReference>
<dbReference type="GO" id="GO:0005030">
    <property type="term" value="F:neurotrophin receptor activity"/>
    <property type="evidence" value="ECO:0007669"/>
    <property type="project" value="TreeGrafter"/>
</dbReference>
<dbReference type="GO" id="GO:0004714">
    <property type="term" value="F:transmembrane receptor protein tyrosine kinase activity"/>
    <property type="evidence" value="ECO:0007669"/>
    <property type="project" value="UniProtKB-EC"/>
</dbReference>
<dbReference type="GO" id="GO:0030154">
    <property type="term" value="P:cell differentiation"/>
    <property type="evidence" value="ECO:0007669"/>
    <property type="project" value="UniProtKB-KW"/>
</dbReference>
<dbReference type="GO" id="GO:0007169">
    <property type="term" value="P:cell surface receptor protein tyrosine kinase signaling pathway"/>
    <property type="evidence" value="ECO:0007669"/>
    <property type="project" value="InterPro"/>
</dbReference>
<dbReference type="GO" id="GO:1990090">
    <property type="term" value="P:cellular response to nerve growth factor stimulus"/>
    <property type="evidence" value="ECO:0007669"/>
    <property type="project" value="TreeGrafter"/>
</dbReference>
<dbReference type="GO" id="GO:0007399">
    <property type="term" value="P:nervous system development"/>
    <property type="evidence" value="ECO:0007669"/>
    <property type="project" value="UniProtKB-KW"/>
</dbReference>
<dbReference type="GO" id="GO:0010976">
    <property type="term" value="P:positive regulation of neuron projection development"/>
    <property type="evidence" value="ECO:0007669"/>
    <property type="project" value="TreeGrafter"/>
</dbReference>
<dbReference type="GO" id="GO:0051897">
    <property type="term" value="P:positive regulation of phosphatidylinositol 3-kinase/protein kinase B signal transduction"/>
    <property type="evidence" value="ECO:0007669"/>
    <property type="project" value="TreeGrafter"/>
</dbReference>
<dbReference type="CDD" id="cd05049">
    <property type="entry name" value="PTKc_Trk"/>
    <property type="match status" value="1"/>
</dbReference>
<dbReference type="FunFam" id="1.10.510.10:FF:000034">
    <property type="entry name" value="Tyrosine-protein kinase receptor"/>
    <property type="match status" value="1"/>
</dbReference>
<dbReference type="FunFam" id="3.30.200.20:FF:000033">
    <property type="entry name" value="Tyrosine-protein kinase receptor"/>
    <property type="match status" value="1"/>
</dbReference>
<dbReference type="Gene3D" id="2.60.40.10">
    <property type="entry name" value="Immunoglobulins"/>
    <property type="match status" value="1"/>
</dbReference>
<dbReference type="Gene3D" id="3.30.200.20">
    <property type="entry name" value="Phosphorylase Kinase, domain 1"/>
    <property type="match status" value="1"/>
</dbReference>
<dbReference type="Gene3D" id="3.80.10.10">
    <property type="entry name" value="Ribonuclease Inhibitor"/>
    <property type="match status" value="1"/>
</dbReference>
<dbReference type="Gene3D" id="1.10.510.10">
    <property type="entry name" value="Transferase(Phosphotransferase) domain 1"/>
    <property type="match status" value="1"/>
</dbReference>
<dbReference type="InterPro" id="IPR013783">
    <property type="entry name" value="Ig-like_fold"/>
</dbReference>
<dbReference type="InterPro" id="IPR011009">
    <property type="entry name" value="Kinase-like_dom_sf"/>
</dbReference>
<dbReference type="InterPro" id="IPR001611">
    <property type="entry name" value="Leu-rich_rpt"/>
</dbReference>
<dbReference type="InterPro" id="IPR032675">
    <property type="entry name" value="LRR_dom_sf"/>
</dbReference>
<dbReference type="InterPro" id="IPR000719">
    <property type="entry name" value="Prot_kinase_dom"/>
</dbReference>
<dbReference type="InterPro" id="IPR017441">
    <property type="entry name" value="Protein_kinase_ATP_BS"/>
</dbReference>
<dbReference type="InterPro" id="IPR050122">
    <property type="entry name" value="RTK"/>
</dbReference>
<dbReference type="InterPro" id="IPR001245">
    <property type="entry name" value="Ser-Thr/Tyr_kinase_cat_dom"/>
</dbReference>
<dbReference type="InterPro" id="IPR008266">
    <property type="entry name" value="Tyr_kinase_AS"/>
</dbReference>
<dbReference type="InterPro" id="IPR020635">
    <property type="entry name" value="Tyr_kinase_cat_dom"/>
</dbReference>
<dbReference type="InterPro" id="IPR002011">
    <property type="entry name" value="Tyr_kinase_rcpt_2_CS"/>
</dbReference>
<dbReference type="PANTHER" id="PTHR24416:SF614">
    <property type="entry name" value="PROTEIN KINASE DOMAIN-CONTAINING PROTEIN"/>
    <property type="match status" value="1"/>
</dbReference>
<dbReference type="PANTHER" id="PTHR24416">
    <property type="entry name" value="TYROSINE-PROTEIN KINASE RECEPTOR"/>
    <property type="match status" value="1"/>
</dbReference>
<dbReference type="Pfam" id="PF13855">
    <property type="entry name" value="LRR_8"/>
    <property type="match status" value="1"/>
</dbReference>
<dbReference type="Pfam" id="PF07714">
    <property type="entry name" value="PK_Tyr_Ser-Thr"/>
    <property type="match status" value="1"/>
</dbReference>
<dbReference type="PRINTS" id="PR00109">
    <property type="entry name" value="TYRKINASE"/>
</dbReference>
<dbReference type="SMART" id="SM00219">
    <property type="entry name" value="TyrKc"/>
    <property type="match status" value="1"/>
</dbReference>
<dbReference type="SUPFAM" id="SSF52058">
    <property type="entry name" value="L domain-like"/>
    <property type="match status" value="1"/>
</dbReference>
<dbReference type="SUPFAM" id="SSF56112">
    <property type="entry name" value="Protein kinase-like (PK-like)"/>
    <property type="match status" value="1"/>
</dbReference>
<dbReference type="PROSITE" id="PS51450">
    <property type="entry name" value="LRR"/>
    <property type="match status" value="3"/>
</dbReference>
<dbReference type="PROSITE" id="PS00107">
    <property type="entry name" value="PROTEIN_KINASE_ATP"/>
    <property type="match status" value="1"/>
</dbReference>
<dbReference type="PROSITE" id="PS50011">
    <property type="entry name" value="PROTEIN_KINASE_DOM"/>
    <property type="match status" value="1"/>
</dbReference>
<dbReference type="PROSITE" id="PS00109">
    <property type="entry name" value="PROTEIN_KINASE_TYR"/>
    <property type="match status" value="1"/>
</dbReference>
<dbReference type="PROSITE" id="PS00239">
    <property type="entry name" value="RECEPTOR_TYR_KIN_II"/>
    <property type="match status" value="1"/>
</dbReference>
<accession>O76997</accession>
<protein>
    <recommendedName>
        <fullName>Putative neurotrophin receptor LTRK 1</fullName>
        <ecNumber>2.7.10.1</ecNumber>
    </recommendedName>
</protein>
<proteinExistence type="evidence at transcript level"/>
<organism>
    <name type="scientific">Lymnaea stagnalis</name>
    <name type="common">Great pond snail</name>
    <name type="synonym">Helix stagnalis</name>
    <dbReference type="NCBI Taxonomy" id="6523"/>
    <lineage>
        <taxon>Eukaryota</taxon>
        <taxon>Metazoa</taxon>
        <taxon>Spiralia</taxon>
        <taxon>Lophotrochozoa</taxon>
        <taxon>Mollusca</taxon>
        <taxon>Gastropoda</taxon>
        <taxon>Heterobranchia</taxon>
        <taxon>Euthyneura</taxon>
        <taxon>Panpulmonata</taxon>
        <taxon>Hygrophila</taxon>
        <taxon>Lymnaeoidea</taxon>
        <taxon>Lymnaeidae</taxon>
        <taxon>Lymnaea</taxon>
    </lineage>
</organism>
<comment type="function">
    <text>May bind an endogenous invertebrate neurotrophin. Binds human NT-3, but not NGF or BDNF.</text>
</comment>
<comment type="catalytic activity">
    <reaction evidence="4">
        <text>L-tyrosyl-[protein] + ATP = O-phospho-L-tyrosyl-[protein] + ADP + H(+)</text>
        <dbReference type="Rhea" id="RHEA:10596"/>
        <dbReference type="Rhea" id="RHEA-COMP:10136"/>
        <dbReference type="Rhea" id="RHEA-COMP:20101"/>
        <dbReference type="ChEBI" id="CHEBI:15378"/>
        <dbReference type="ChEBI" id="CHEBI:30616"/>
        <dbReference type="ChEBI" id="CHEBI:46858"/>
        <dbReference type="ChEBI" id="CHEBI:61978"/>
        <dbReference type="ChEBI" id="CHEBI:456216"/>
        <dbReference type="EC" id="2.7.10.1"/>
    </reaction>
</comment>
<comment type="subcellular location">
    <subcellularLocation>
        <location>Membrane</location>
        <topology>Single-pass type I membrane protein</topology>
    </subcellularLocation>
</comment>
<comment type="tissue specificity">
    <text>Expression is confined to the central nervous system and its associated endocrine tissues.</text>
</comment>
<comment type="similarity">
    <text evidence="3">Belongs to the protein kinase superfamily. Tyr protein kinase family. Insulin receptor subfamily.</text>
</comment>
<keyword id="KW-0067">ATP-binding</keyword>
<keyword id="KW-0217">Developmental protein</keyword>
<keyword id="KW-0221">Differentiation</keyword>
<keyword id="KW-0325">Glycoprotein</keyword>
<keyword id="KW-0418">Kinase</keyword>
<keyword id="KW-0433">Leucine-rich repeat</keyword>
<keyword id="KW-0472">Membrane</keyword>
<keyword id="KW-0524">Neurogenesis</keyword>
<keyword id="KW-0547">Nucleotide-binding</keyword>
<keyword id="KW-0597">Phosphoprotein</keyword>
<keyword id="KW-0675">Receptor</keyword>
<keyword id="KW-0677">Repeat</keyword>
<keyword id="KW-0732">Signal</keyword>
<keyword id="KW-0808">Transferase</keyword>
<keyword id="KW-0812">Transmembrane</keyword>
<keyword id="KW-1133">Transmembrane helix</keyword>
<keyword id="KW-0829">Tyrosine-protein kinase</keyword>
<evidence type="ECO:0000250" key="1"/>
<evidence type="ECO:0000255" key="2"/>
<evidence type="ECO:0000255" key="3">
    <source>
        <dbReference type="PROSITE-ProRule" id="PRU00159"/>
    </source>
</evidence>
<evidence type="ECO:0000255" key="4">
    <source>
        <dbReference type="PROSITE-ProRule" id="PRU10028"/>
    </source>
</evidence>
<evidence type="ECO:0000256" key="5">
    <source>
        <dbReference type="SAM" id="MobiDB-lite"/>
    </source>
</evidence>
<name>TRK1_LYMST</name>
<sequence length="794" mass="89054">MRGPRRFRLWTRANVLTVISILTSILSGAGCSPLSQLPSDNPAHVGVQDGVTTERVDRSKNHRNTTASSGAHRVTSGEPLGDRVTTRSTTAPDQVPGDASRNTTMAGTKCSLQVDLSTFACPADCQCNATSEGMVVSCVTPDTLREFPVIAREVARAVIKLELRGQSKLTSLKTELKFFTCLKHLTIENCGLNNIQGIAFKTLTSLETINLRHNHLTEFPQELLRTLNLRELWLEGNALTCSCTNLWLRSVDVAADRSEMTCSTRDGVSKMKMTQFKCEPCGIPDIRNMTLVFEPKNGMFLLRFVISGCPKPKIDLLRNHHHVLRSGSSQFKLTDFKSEFNGQVVTGTITILPHMETSQTTYVLTAVNSKGQANQTFHLYDQTTPASSIHIPLSNIPPRISSATTPRASPTEDFGPQTQVILPVVGVVILLISAVFIIYLCQRAKHRSHARQRCKKALLDKKFNEFQEGVPLTGLQLVDNPNYNLTKKKHVATTCPKTVRLQTILLMRVIGEGAFGRVFLGTCAHLIQKNEFAIVAVKTLKGSCSDSLKRDFEREAEMLATIEHANIVTFYGVCTESDQWMMIFEFMENGDLNKYLRMHGPDAAFLKDRDSMDSDEGQLTREQLMKIVLQIASAMEYLALQHFVHRDLATRNCLVGCDLVVKLGDFGMSRDVYTTDYYRVEGTAMLPVRWMPPESIIYRTFTTESDVWSFGVTLWEVFTYGKQPWFEYSNSEVIEHIKNSRTLKRPPRTCTDGVYRVMQGCWKPNPQDRLTMKDIAELLREEVSGDPVYIDIIA</sequence>